<comment type="function">
    <text evidence="1">Reversibly transfers an adenylyl group from ATP to 4'-phosphopantetheine, yielding dephospho-CoA (dPCoA) and pyrophosphate.</text>
</comment>
<comment type="catalytic activity">
    <reaction evidence="1">
        <text>(R)-4'-phosphopantetheine + ATP + H(+) = 3'-dephospho-CoA + diphosphate</text>
        <dbReference type="Rhea" id="RHEA:19801"/>
        <dbReference type="ChEBI" id="CHEBI:15378"/>
        <dbReference type="ChEBI" id="CHEBI:30616"/>
        <dbReference type="ChEBI" id="CHEBI:33019"/>
        <dbReference type="ChEBI" id="CHEBI:57328"/>
        <dbReference type="ChEBI" id="CHEBI:61723"/>
        <dbReference type="EC" id="2.7.7.3"/>
    </reaction>
</comment>
<comment type="cofactor">
    <cofactor evidence="1">
        <name>Mg(2+)</name>
        <dbReference type="ChEBI" id="CHEBI:18420"/>
    </cofactor>
</comment>
<comment type="pathway">
    <text evidence="1">Cofactor biosynthesis; coenzyme A biosynthesis; CoA from (R)-pantothenate: step 4/5.</text>
</comment>
<comment type="subunit">
    <text evidence="1">Homohexamer.</text>
</comment>
<comment type="subcellular location">
    <subcellularLocation>
        <location evidence="1">Cytoplasm</location>
    </subcellularLocation>
</comment>
<comment type="similarity">
    <text evidence="1">Belongs to the bacterial CoaD family.</text>
</comment>
<keyword id="KW-0067">ATP-binding</keyword>
<keyword id="KW-0173">Coenzyme A biosynthesis</keyword>
<keyword id="KW-0963">Cytoplasm</keyword>
<keyword id="KW-0460">Magnesium</keyword>
<keyword id="KW-0547">Nucleotide-binding</keyword>
<keyword id="KW-0548">Nucleotidyltransferase</keyword>
<keyword id="KW-1185">Reference proteome</keyword>
<keyword id="KW-0808">Transferase</keyword>
<accession>Q7UKG6</accession>
<feature type="chain" id="PRO_0000156264" description="Phosphopantetheine adenylyltransferase">
    <location>
        <begin position="1"/>
        <end position="179"/>
    </location>
</feature>
<feature type="binding site" evidence="1">
    <location>
        <begin position="23"/>
        <end position="24"/>
    </location>
    <ligand>
        <name>ATP</name>
        <dbReference type="ChEBI" id="CHEBI:30616"/>
    </ligand>
</feature>
<feature type="binding site" evidence="1">
    <location>
        <position position="23"/>
    </location>
    <ligand>
        <name>substrate</name>
    </ligand>
</feature>
<feature type="binding site" evidence="1">
    <location>
        <position position="31"/>
    </location>
    <ligand>
        <name>ATP</name>
        <dbReference type="ChEBI" id="CHEBI:30616"/>
    </ligand>
</feature>
<feature type="binding site" evidence="1">
    <location>
        <position position="55"/>
    </location>
    <ligand>
        <name>substrate</name>
    </ligand>
</feature>
<feature type="binding site" evidence="1">
    <location>
        <position position="87"/>
    </location>
    <ligand>
        <name>substrate</name>
    </ligand>
</feature>
<feature type="binding site" evidence="1">
    <location>
        <position position="101"/>
    </location>
    <ligand>
        <name>substrate</name>
    </ligand>
</feature>
<feature type="binding site" evidence="1">
    <location>
        <begin position="102"/>
        <end position="104"/>
    </location>
    <ligand>
        <name>ATP</name>
        <dbReference type="ChEBI" id="CHEBI:30616"/>
    </ligand>
</feature>
<feature type="binding site" evidence="1">
    <location>
        <position position="112"/>
    </location>
    <ligand>
        <name>ATP</name>
        <dbReference type="ChEBI" id="CHEBI:30616"/>
    </ligand>
</feature>
<feature type="binding site" evidence="1">
    <location>
        <begin position="137"/>
        <end position="143"/>
    </location>
    <ligand>
        <name>ATP</name>
        <dbReference type="ChEBI" id="CHEBI:30616"/>
    </ligand>
</feature>
<feature type="site" description="Transition state stabilizer" evidence="1">
    <location>
        <position position="31"/>
    </location>
</feature>
<protein>
    <recommendedName>
        <fullName evidence="1">Phosphopantetheine adenylyltransferase</fullName>
        <ecNumber evidence="1">2.7.7.3</ecNumber>
    </recommendedName>
    <alternativeName>
        <fullName evidence="1">Dephospho-CoA pyrophosphorylase</fullName>
    </alternativeName>
    <alternativeName>
        <fullName evidence="1">Pantetheine-phosphate adenylyltransferase</fullName>
        <shortName evidence="1">PPAT</shortName>
    </alternativeName>
</protein>
<evidence type="ECO:0000255" key="1">
    <source>
        <dbReference type="HAMAP-Rule" id="MF_00151"/>
    </source>
</evidence>
<dbReference type="EC" id="2.7.7.3" evidence="1"/>
<dbReference type="EMBL" id="BX294152">
    <property type="protein sequence ID" value="CAD76898.1"/>
    <property type="molecule type" value="Genomic_DNA"/>
</dbReference>
<dbReference type="RefSeq" id="NP_869537.1">
    <property type="nucleotide sequence ID" value="NC_005027.1"/>
</dbReference>
<dbReference type="RefSeq" id="WP_011122863.1">
    <property type="nucleotide sequence ID" value="NC_005027.1"/>
</dbReference>
<dbReference type="SMR" id="Q7UKG6"/>
<dbReference type="FunCoup" id="Q7UKG6">
    <property type="interactions" value="372"/>
</dbReference>
<dbReference type="STRING" id="243090.RB10654"/>
<dbReference type="EnsemblBacteria" id="CAD76898">
    <property type="protein sequence ID" value="CAD76898"/>
    <property type="gene ID" value="RB10654"/>
</dbReference>
<dbReference type="KEGG" id="rba:RB10654"/>
<dbReference type="PATRIC" id="fig|243090.15.peg.5147"/>
<dbReference type="eggNOG" id="COG0669">
    <property type="taxonomic scope" value="Bacteria"/>
</dbReference>
<dbReference type="HOGENOM" id="CLU_100149_0_1_0"/>
<dbReference type="InParanoid" id="Q7UKG6"/>
<dbReference type="OrthoDB" id="9806661at2"/>
<dbReference type="UniPathway" id="UPA00241">
    <property type="reaction ID" value="UER00355"/>
</dbReference>
<dbReference type="Proteomes" id="UP000001025">
    <property type="component" value="Chromosome"/>
</dbReference>
<dbReference type="GO" id="GO:0005737">
    <property type="term" value="C:cytoplasm"/>
    <property type="evidence" value="ECO:0007669"/>
    <property type="project" value="UniProtKB-SubCell"/>
</dbReference>
<dbReference type="GO" id="GO:0005524">
    <property type="term" value="F:ATP binding"/>
    <property type="evidence" value="ECO:0007669"/>
    <property type="project" value="UniProtKB-KW"/>
</dbReference>
<dbReference type="GO" id="GO:0004595">
    <property type="term" value="F:pantetheine-phosphate adenylyltransferase activity"/>
    <property type="evidence" value="ECO:0000318"/>
    <property type="project" value="GO_Central"/>
</dbReference>
<dbReference type="GO" id="GO:0015937">
    <property type="term" value="P:coenzyme A biosynthetic process"/>
    <property type="evidence" value="ECO:0000318"/>
    <property type="project" value="GO_Central"/>
</dbReference>
<dbReference type="CDD" id="cd02163">
    <property type="entry name" value="PPAT"/>
    <property type="match status" value="1"/>
</dbReference>
<dbReference type="Gene3D" id="3.40.50.620">
    <property type="entry name" value="HUPs"/>
    <property type="match status" value="1"/>
</dbReference>
<dbReference type="HAMAP" id="MF_00151">
    <property type="entry name" value="PPAT_bact"/>
    <property type="match status" value="1"/>
</dbReference>
<dbReference type="InterPro" id="IPR004821">
    <property type="entry name" value="Cyt_trans-like"/>
</dbReference>
<dbReference type="InterPro" id="IPR001980">
    <property type="entry name" value="PPAT"/>
</dbReference>
<dbReference type="InterPro" id="IPR014729">
    <property type="entry name" value="Rossmann-like_a/b/a_fold"/>
</dbReference>
<dbReference type="NCBIfam" id="TIGR01510">
    <property type="entry name" value="coaD_prev_kdtB"/>
    <property type="match status" value="1"/>
</dbReference>
<dbReference type="NCBIfam" id="TIGR00125">
    <property type="entry name" value="cyt_tran_rel"/>
    <property type="match status" value="1"/>
</dbReference>
<dbReference type="PANTHER" id="PTHR21342">
    <property type="entry name" value="PHOSPHOPANTETHEINE ADENYLYLTRANSFERASE"/>
    <property type="match status" value="1"/>
</dbReference>
<dbReference type="PANTHER" id="PTHR21342:SF1">
    <property type="entry name" value="PHOSPHOPANTETHEINE ADENYLYLTRANSFERASE"/>
    <property type="match status" value="1"/>
</dbReference>
<dbReference type="Pfam" id="PF01467">
    <property type="entry name" value="CTP_transf_like"/>
    <property type="match status" value="1"/>
</dbReference>
<dbReference type="PRINTS" id="PR01020">
    <property type="entry name" value="LPSBIOSNTHSS"/>
</dbReference>
<dbReference type="SUPFAM" id="SSF52374">
    <property type="entry name" value="Nucleotidylyl transferase"/>
    <property type="match status" value="1"/>
</dbReference>
<reference key="1">
    <citation type="journal article" date="2003" name="Proc. Natl. Acad. Sci. U.S.A.">
        <title>Complete genome sequence of the marine planctomycete Pirellula sp. strain 1.</title>
        <authorList>
            <person name="Gloeckner F.O."/>
            <person name="Kube M."/>
            <person name="Bauer M."/>
            <person name="Teeling H."/>
            <person name="Lombardot T."/>
            <person name="Ludwig W."/>
            <person name="Gade D."/>
            <person name="Beck A."/>
            <person name="Borzym K."/>
            <person name="Heitmann K."/>
            <person name="Rabus R."/>
            <person name="Schlesner H."/>
            <person name="Amann R."/>
            <person name="Reinhardt R."/>
        </authorList>
    </citation>
    <scope>NUCLEOTIDE SEQUENCE [LARGE SCALE GENOMIC DNA]</scope>
    <source>
        <strain>DSM 10527 / NCIMB 13988 / SH1</strain>
    </source>
</reference>
<name>COAD_RHOBA</name>
<organism>
    <name type="scientific">Rhodopirellula baltica (strain DSM 10527 / NCIMB 13988 / SH1)</name>
    <dbReference type="NCBI Taxonomy" id="243090"/>
    <lineage>
        <taxon>Bacteria</taxon>
        <taxon>Pseudomonadati</taxon>
        <taxon>Planctomycetota</taxon>
        <taxon>Planctomycetia</taxon>
        <taxon>Pirellulales</taxon>
        <taxon>Pirellulaceae</taxon>
        <taxon>Rhodopirellula</taxon>
    </lineage>
</organism>
<proteinExistence type="inferred from homology"/>
<gene>
    <name evidence="1" type="primary">coaD</name>
    <name type="ordered locus">RB10654</name>
</gene>
<sequence>MTLNSSHTDAGGLSHSIAVYTGSFDPVTLGHLHIIERASKLFDTLVVGIGINADKKSLFNPEERIELVQTISNHLPNVRVQTFDGLAVDFVRSLGAGVMVRGIRPLTDIAGEFTMMMANRQLDADIETVFLMADERFAHVSSSLLKQIAALSENDDHLAKFVPRPIIPSLRAKLAAPSV</sequence>